<protein>
    <recommendedName>
        <fullName evidence="1">Small, acid-soluble spore protein O</fullName>
        <shortName evidence="1">SASP O</shortName>
    </recommendedName>
</protein>
<sequence length="49" mass="5486">MAKRKANHVIPGMNAAKAQGMGAGYNEEFSNEPLTEAQRQNNKKRKKNQ</sequence>
<feature type="chain" id="PRO_0000217209" description="Small, acid-soluble spore protein O">
    <location>
        <begin position="1"/>
        <end position="49"/>
    </location>
</feature>
<feature type="region of interest" description="Disordered" evidence="2">
    <location>
        <begin position="24"/>
        <end position="49"/>
    </location>
</feature>
<evidence type="ECO:0000255" key="1">
    <source>
        <dbReference type="HAMAP-Rule" id="MF_00665"/>
    </source>
</evidence>
<evidence type="ECO:0000256" key="2">
    <source>
        <dbReference type="SAM" id="MobiDB-lite"/>
    </source>
</evidence>
<accession>Q5L0A5</accession>
<reference key="1">
    <citation type="journal article" date="2004" name="Nucleic Acids Res.">
        <title>Thermoadaptation trait revealed by the genome sequence of thermophilic Geobacillus kaustophilus.</title>
        <authorList>
            <person name="Takami H."/>
            <person name="Takaki Y."/>
            <person name="Chee G.-J."/>
            <person name="Nishi S."/>
            <person name="Shimamura S."/>
            <person name="Suzuki H."/>
            <person name="Matsui S."/>
            <person name="Uchiyama I."/>
        </authorList>
    </citation>
    <scope>NUCLEOTIDE SEQUENCE [LARGE SCALE GENOMIC DNA]</scope>
    <source>
        <strain>HTA426</strain>
    </source>
</reference>
<dbReference type="EMBL" id="BA000043">
    <property type="protein sequence ID" value="BAD75631.1"/>
    <property type="molecule type" value="Genomic_DNA"/>
</dbReference>
<dbReference type="RefSeq" id="WP_008879509.1">
    <property type="nucleotide sequence ID" value="NC_006510.1"/>
</dbReference>
<dbReference type="STRING" id="235909.GK1346"/>
<dbReference type="GeneID" id="89613555"/>
<dbReference type="KEGG" id="gka:GK1346"/>
<dbReference type="eggNOG" id="ENOG5033BZS">
    <property type="taxonomic scope" value="Bacteria"/>
</dbReference>
<dbReference type="HOGENOM" id="CLU_206342_0_0_9"/>
<dbReference type="Proteomes" id="UP000001172">
    <property type="component" value="Chromosome"/>
</dbReference>
<dbReference type="GO" id="GO:0042601">
    <property type="term" value="C:endospore-forming forespore"/>
    <property type="evidence" value="ECO:0007669"/>
    <property type="project" value="InterPro"/>
</dbReference>
<dbReference type="GO" id="GO:0030436">
    <property type="term" value="P:asexual sporulation"/>
    <property type="evidence" value="ECO:0007669"/>
    <property type="project" value="UniProtKB-UniRule"/>
</dbReference>
<dbReference type="GO" id="GO:0030435">
    <property type="term" value="P:sporulation resulting in formation of a cellular spore"/>
    <property type="evidence" value="ECO:0007669"/>
    <property type="project" value="UniProtKB-KW"/>
</dbReference>
<dbReference type="HAMAP" id="MF_00665">
    <property type="entry name" value="SspO"/>
    <property type="match status" value="1"/>
</dbReference>
<dbReference type="InterPro" id="IPR012613">
    <property type="entry name" value="SASP_SspO"/>
</dbReference>
<dbReference type="NCBIfam" id="TIGR02864">
    <property type="entry name" value="spore_sspO"/>
    <property type="match status" value="1"/>
</dbReference>
<dbReference type="Pfam" id="PF08175">
    <property type="entry name" value="SspO"/>
    <property type="match status" value="1"/>
</dbReference>
<organism>
    <name type="scientific">Geobacillus kaustophilus (strain HTA426)</name>
    <dbReference type="NCBI Taxonomy" id="235909"/>
    <lineage>
        <taxon>Bacteria</taxon>
        <taxon>Bacillati</taxon>
        <taxon>Bacillota</taxon>
        <taxon>Bacilli</taxon>
        <taxon>Bacillales</taxon>
        <taxon>Anoxybacillaceae</taxon>
        <taxon>Geobacillus</taxon>
        <taxon>Geobacillus thermoleovorans group</taxon>
    </lineage>
</organism>
<comment type="subcellular location">
    <subcellularLocation>
        <location evidence="1">Spore core</location>
    </subcellularLocation>
</comment>
<comment type="induction">
    <text evidence="1">Expressed only in the forespore compartment of sporulating cells.</text>
</comment>
<comment type="similarity">
    <text evidence="1">Belongs to the SspO family.</text>
</comment>
<keyword id="KW-1185">Reference proteome</keyword>
<keyword id="KW-0749">Sporulation</keyword>
<proteinExistence type="inferred from homology"/>
<gene>
    <name evidence="1" type="primary">sspO</name>
    <name type="ordered locus">GK1346</name>
</gene>
<name>SSPO_GEOKA</name>